<accession>Q1MJG9</accession>
<organism>
    <name type="scientific">Rhizobium johnstonii (strain DSM 114642 / LMG 32736 / 3841)</name>
    <name type="common">Rhizobium leguminosarum bv. viciae</name>
    <dbReference type="NCBI Taxonomy" id="216596"/>
    <lineage>
        <taxon>Bacteria</taxon>
        <taxon>Pseudomonadati</taxon>
        <taxon>Pseudomonadota</taxon>
        <taxon>Alphaproteobacteria</taxon>
        <taxon>Hyphomicrobiales</taxon>
        <taxon>Rhizobiaceae</taxon>
        <taxon>Rhizobium/Agrobacterium group</taxon>
        <taxon>Rhizobium</taxon>
        <taxon>Rhizobium johnstonii</taxon>
    </lineage>
</organism>
<name>Y1394_RHIJ3</name>
<sequence length="158" mass="17990">MNDLPFWKSKTLAEMSVPEWESLCDGCGLCCLNKIEEWDSGDIYFTSVSCKLLDGESCRCSSYENRWDFVPDCVQLTKENVPDIAWLPPTCGYRLVNEGRDLYWWHPLVSGDPETVHAAGISARGRSINENEIDLDDLEDYVVDWPLTVGEEKDDEDA</sequence>
<reference key="1">
    <citation type="journal article" date="2006" name="Genome Biol.">
        <title>The genome of Rhizobium leguminosarum has recognizable core and accessory components.</title>
        <authorList>
            <person name="Young J.P.W."/>
            <person name="Crossman L.C."/>
            <person name="Johnston A.W.B."/>
            <person name="Thomson N.R."/>
            <person name="Ghazoui Z.F."/>
            <person name="Hull K.H."/>
            <person name="Wexler M."/>
            <person name="Curson A.R.J."/>
            <person name="Todd J.D."/>
            <person name="Poole P.S."/>
            <person name="Mauchline T.H."/>
            <person name="East A.K."/>
            <person name="Quail M.A."/>
            <person name="Churcher C."/>
            <person name="Arrowsmith C."/>
            <person name="Cherevach I."/>
            <person name="Chillingworth T."/>
            <person name="Clarke K."/>
            <person name="Cronin A."/>
            <person name="Davis P."/>
            <person name="Fraser A."/>
            <person name="Hance Z."/>
            <person name="Hauser H."/>
            <person name="Jagels K."/>
            <person name="Moule S."/>
            <person name="Mungall K."/>
            <person name="Norbertczak H."/>
            <person name="Rabbinowitsch E."/>
            <person name="Sanders M."/>
            <person name="Simmonds M."/>
            <person name="Whitehead S."/>
            <person name="Parkhill J."/>
        </authorList>
    </citation>
    <scope>NUCLEOTIDE SEQUENCE [LARGE SCALE GENOMIC DNA]</scope>
    <source>
        <strain>DSM 114642 / LMG 32736 / 3841</strain>
    </source>
</reference>
<protein>
    <recommendedName>
        <fullName evidence="1">UPF0260 protein RL1394</fullName>
    </recommendedName>
</protein>
<evidence type="ECO:0000255" key="1">
    <source>
        <dbReference type="HAMAP-Rule" id="MF_00676"/>
    </source>
</evidence>
<feature type="chain" id="PRO_1000044805" description="UPF0260 protein RL1394">
    <location>
        <begin position="1"/>
        <end position="158"/>
    </location>
</feature>
<gene>
    <name type="ordered locus">RL1394</name>
</gene>
<comment type="similarity">
    <text evidence="1">Belongs to the UPF0260 family.</text>
</comment>
<dbReference type="EMBL" id="AM236080">
    <property type="protein sequence ID" value="CAK06891.1"/>
    <property type="molecule type" value="Genomic_DNA"/>
</dbReference>
<dbReference type="RefSeq" id="WP_011651099.1">
    <property type="nucleotide sequence ID" value="NC_008380.1"/>
</dbReference>
<dbReference type="EnsemblBacteria" id="CAK06891">
    <property type="protein sequence ID" value="CAK06891"/>
    <property type="gene ID" value="RL1394"/>
</dbReference>
<dbReference type="KEGG" id="rle:RL1394"/>
<dbReference type="eggNOG" id="COG2983">
    <property type="taxonomic scope" value="Bacteria"/>
</dbReference>
<dbReference type="HOGENOM" id="CLU_109769_0_1_5"/>
<dbReference type="Proteomes" id="UP000006575">
    <property type="component" value="Chromosome"/>
</dbReference>
<dbReference type="HAMAP" id="MF_00676">
    <property type="entry name" value="UPF0260"/>
    <property type="match status" value="1"/>
</dbReference>
<dbReference type="InterPro" id="IPR005358">
    <property type="entry name" value="Puta_zinc/iron-chelating_dom"/>
</dbReference>
<dbReference type="InterPro" id="IPR008228">
    <property type="entry name" value="UCP006173"/>
</dbReference>
<dbReference type="NCBIfam" id="NF003501">
    <property type="entry name" value="PRK05170.1-5"/>
    <property type="match status" value="1"/>
</dbReference>
<dbReference type="NCBIfam" id="NF003507">
    <property type="entry name" value="PRK05170.2-5"/>
    <property type="match status" value="1"/>
</dbReference>
<dbReference type="PANTHER" id="PTHR37421">
    <property type="entry name" value="UPF0260 PROTEIN YCGN"/>
    <property type="match status" value="1"/>
</dbReference>
<dbReference type="PANTHER" id="PTHR37421:SF1">
    <property type="entry name" value="UPF0260 PROTEIN YCGN"/>
    <property type="match status" value="1"/>
</dbReference>
<dbReference type="Pfam" id="PF03692">
    <property type="entry name" value="CxxCxxCC"/>
    <property type="match status" value="1"/>
</dbReference>
<dbReference type="PIRSF" id="PIRSF006173">
    <property type="entry name" value="UCP006173"/>
    <property type="match status" value="1"/>
</dbReference>
<proteinExistence type="inferred from homology"/>